<feature type="signal peptide" evidence="2">
    <location>
        <begin position="1"/>
        <end position="23"/>
    </location>
</feature>
<feature type="chain" id="PRO_0000396123" description="RING-H2 finger protein ATL22">
    <location>
        <begin position="24"/>
        <end position="377"/>
    </location>
</feature>
<feature type="transmembrane region" description="Helical" evidence="2">
    <location>
        <begin position="244"/>
        <end position="264"/>
    </location>
</feature>
<feature type="zinc finger region" description="RING-type; atypical" evidence="3">
    <location>
        <begin position="327"/>
        <end position="369"/>
    </location>
</feature>
<reference key="1">
    <citation type="journal article" date="1999" name="Nature">
        <title>Sequence and analysis of chromosome 2 of the plant Arabidopsis thaliana.</title>
        <authorList>
            <person name="Lin X."/>
            <person name="Kaul S."/>
            <person name="Rounsley S.D."/>
            <person name="Shea T.P."/>
            <person name="Benito M.-I."/>
            <person name="Town C.D."/>
            <person name="Fujii C.Y."/>
            <person name="Mason T.M."/>
            <person name="Bowman C.L."/>
            <person name="Barnstead M.E."/>
            <person name="Feldblyum T.V."/>
            <person name="Buell C.R."/>
            <person name="Ketchum K.A."/>
            <person name="Lee J.J."/>
            <person name="Ronning C.M."/>
            <person name="Koo H.L."/>
            <person name="Moffat K.S."/>
            <person name="Cronin L.A."/>
            <person name="Shen M."/>
            <person name="Pai G."/>
            <person name="Van Aken S."/>
            <person name="Umayam L."/>
            <person name="Tallon L.J."/>
            <person name="Gill J.E."/>
            <person name="Adams M.D."/>
            <person name="Carrera A.J."/>
            <person name="Creasy T.H."/>
            <person name="Goodman H.M."/>
            <person name="Somerville C.R."/>
            <person name="Copenhaver G.P."/>
            <person name="Preuss D."/>
            <person name="Nierman W.C."/>
            <person name="White O."/>
            <person name="Eisen J.A."/>
            <person name="Salzberg S.L."/>
            <person name="Fraser C.M."/>
            <person name="Venter J.C."/>
        </authorList>
    </citation>
    <scope>NUCLEOTIDE SEQUENCE [LARGE SCALE GENOMIC DNA]</scope>
    <source>
        <strain>cv. Columbia</strain>
    </source>
</reference>
<reference key="2">
    <citation type="journal article" date="2017" name="Plant J.">
        <title>Araport11: a complete reannotation of the Arabidopsis thaliana reference genome.</title>
        <authorList>
            <person name="Cheng C.Y."/>
            <person name="Krishnakumar V."/>
            <person name="Chan A.P."/>
            <person name="Thibaud-Nissen F."/>
            <person name="Schobel S."/>
            <person name="Town C.D."/>
        </authorList>
    </citation>
    <scope>GENOME REANNOTATION</scope>
    <source>
        <strain>cv. Columbia</strain>
    </source>
</reference>
<reference key="3">
    <citation type="journal article" date="2005" name="Plant Physiol.">
        <title>Analysis of the cDNAs of hypothetical genes on Arabidopsis chromosome 2 reveals numerous transcript variants.</title>
        <authorList>
            <person name="Xiao Y.-L."/>
            <person name="Smith S.R."/>
            <person name="Ishmael N."/>
            <person name="Redman J.C."/>
            <person name="Kumar N."/>
            <person name="Monaghan E.L."/>
            <person name="Ayele M."/>
            <person name="Haas B.J."/>
            <person name="Wu H.C."/>
            <person name="Town C.D."/>
        </authorList>
    </citation>
    <scope>NUCLEOTIDE SEQUENCE [LARGE SCALE MRNA] OF 153-377</scope>
    <source>
        <strain>cv. Columbia</strain>
    </source>
</reference>
<reference key="4">
    <citation type="journal article" date="2002" name="Genome Biol.">
        <title>Evaluation and classification of RING-finger domains encoded by the Arabidopsis genome.</title>
        <authorList>
            <person name="Kosarev P."/>
            <person name="Mayer K.F.X."/>
            <person name="Hardtke C.S."/>
        </authorList>
    </citation>
    <scope>GENE FAMILY ORGANIZATION</scope>
</reference>
<reference key="5">
    <citation type="journal article" date="2006" name="J. Mol. Evol.">
        <title>The ATL gene family from Arabidopsis thaliana and Oryza sativa comprises a large number of putative ubiquitin ligases of the RING-H2 type.</title>
        <authorList>
            <person name="Serrano M."/>
            <person name="Parra S."/>
            <person name="Alcaraz L.D."/>
            <person name="Guzman P."/>
        </authorList>
    </citation>
    <scope>NOMENCLATURE</scope>
    <scope>GENE FAMILY ORGANIZATION</scope>
</reference>
<dbReference type="EC" id="2.3.2.27" evidence="4"/>
<dbReference type="EMBL" id="AC006300">
    <property type="protein sequence ID" value="AAD20701.2"/>
    <property type="molecule type" value="Genomic_DNA"/>
</dbReference>
<dbReference type="EMBL" id="CP002685">
    <property type="protein sequence ID" value="AEC07698.1"/>
    <property type="molecule type" value="Genomic_DNA"/>
</dbReference>
<dbReference type="EMBL" id="AY461616">
    <property type="status" value="NOT_ANNOTATED_CDS"/>
    <property type="molecule type" value="mRNA"/>
</dbReference>
<dbReference type="PIR" id="A84648">
    <property type="entry name" value="A84648"/>
</dbReference>
<dbReference type="RefSeq" id="NP_565593.1">
    <property type="nucleotide sequence ID" value="NM_128098.3"/>
</dbReference>
<dbReference type="SMR" id="Q9SKK8"/>
<dbReference type="STRING" id="3702.Q9SKK8"/>
<dbReference type="PaxDb" id="3702-AT2G25410.1"/>
<dbReference type="EnsemblPlants" id="AT2G25410.1">
    <property type="protein sequence ID" value="AT2G25410.1"/>
    <property type="gene ID" value="AT2G25410"/>
</dbReference>
<dbReference type="GeneID" id="817079"/>
<dbReference type="Gramene" id="AT2G25410.1">
    <property type="protein sequence ID" value="AT2G25410.1"/>
    <property type="gene ID" value="AT2G25410"/>
</dbReference>
<dbReference type="KEGG" id="ath:AT2G25410"/>
<dbReference type="Araport" id="AT2G25410"/>
<dbReference type="TAIR" id="AT2G25410">
    <property type="gene designation" value="ATL22"/>
</dbReference>
<dbReference type="eggNOG" id="KOG0800">
    <property type="taxonomic scope" value="Eukaryota"/>
</dbReference>
<dbReference type="HOGENOM" id="CLU_046769_0_0_1"/>
<dbReference type="InParanoid" id="Q9SKK8"/>
<dbReference type="OMA" id="LRCTDQG"/>
<dbReference type="PhylomeDB" id="Q9SKK8"/>
<dbReference type="UniPathway" id="UPA00143"/>
<dbReference type="PRO" id="PR:Q9SKK8"/>
<dbReference type="Proteomes" id="UP000006548">
    <property type="component" value="Chromosome 2"/>
</dbReference>
<dbReference type="ExpressionAtlas" id="Q9SKK8">
    <property type="expression patterns" value="baseline and differential"/>
</dbReference>
<dbReference type="GO" id="GO:0016020">
    <property type="term" value="C:membrane"/>
    <property type="evidence" value="ECO:0007669"/>
    <property type="project" value="UniProtKB-SubCell"/>
</dbReference>
<dbReference type="GO" id="GO:0030247">
    <property type="term" value="F:polysaccharide binding"/>
    <property type="evidence" value="ECO:0007669"/>
    <property type="project" value="InterPro"/>
</dbReference>
<dbReference type="GO" id="GO:0016740">
    <property type="term" value="F:transferase activity"/>
    <property type="evidence" value="ECO:0007669"/>
    <property type="project" value="UniProtKB-KW"/>
</dbReference>
<dbReference type="GO" id="GO:0008270">
    <property type="term" value="F:zinc ion binding"/>
    <property type="evidence" value="ECO:0007669"/>
    <property type="project" value="UniProtKB-KW"/>
</dbReference>
<dbReference type="GO" id="GO:0016567">
    <property type="term" value="P:protein ubiquitination"/>
    <property type="evidence" value="ECO:0007669"/>
    <property type="project" value="UniProtKB-UniPathway"/>
</dbReference>
<dbReference type="CDD" id="cd16461">
    <property type="entry name" value="RING-H2_EL5-like"/>
    <property type="match status" value="1"/>
</dbReference>
<dbReference type="Gene3D" id="3.30.40.10">
    <property type="entry name" value="Zinc/RING finger domain, C3HC4 (zinc finger)"/>
    <property type="match status" value="1"/>
</dbReference>
<dbReference type="InterPro" id="IPR046948">
    <property type="entry name" value="ATL20-22-like"/>
</dbReference>
<dbReference type="InterPro" id="IPR025287">
    <property type="entry name" value="WAK_GUB"/>
</dbReference>
<dbReference type="InterPro" id="IPR001841">
    <property type="entry name" value="Znf_RING"/>
</dbReference>
<dbReference type="InterPro" id="IPR013083">
    <property type="entry name" value="Znf_RING/FYVE/PHD"/>
</dbReference>
<dbReference type="PANTHER" id="PTHR46279:SF15">
    <property type="entry name" value="RING-H2 FINGER PROTEIN ATL22"/>
    <property type="match status" value="1"/>
</dbReference>
<dbReference type="PANTHER" id="PTHR46279">
    <property type="entry name" value="RING/U-BOX SUPERFAMILY PROTEIN"/>
    <property type="match status" value="1"/>
</dbReference>
<dbReference type="Pfam" id="PF13947">
    <property type="entry name" value="GUB_WAK_bind"/>
    <property type="match status" value="1"/>
</dbReference>
<dbReference type="Pfam" id="PF13639">
    <property type="entry name" value="zf-RING_2"/>
    <property type="match status" value="1"/>
</dbReference>
<dbReference type="SMART" id="SM00184">
    <property type="entry name" value="RING"/>
    <property type="match status" value="1"/>
</dbReference>
<dbReference type="SUPFAM" id="SSF57850">
    <property type="entry name" value="RING/U-box"/>
    <property type="match status" value="1"/>
</dbReference>
<dbReference type="PROSITE" id="PS50089">
    <property type="entry name" value="ZF_RING_2"/>
    <property type="match status" value="1"/>
</dbReference>
<comment type="catalytic activity">
    <reaction evidence="4">
        <text>S-ubiquitinyl-[E2 ubiquitin-conjugating enzyme]-L-cysteine + [acceptor protein]-L-lysine = [E2 ubiquitin-conjugating enzyme]-L-cysteine + N(6)-ubiquitinyl-[acceptor protein]-L-lysine.</text>
        <dbReference type="EC" id="2.3.2.27"/>
    </reaction>
</comment>
<comment type="pathway">
    <text>Protein modification; protein ubiquitination.</text>
</comment>
<comment type="subcellular location">
    <subcellularLocation>
        <location evidence="4">Membrane</location>
        <topology evidence="4">Single-pass membrane protein</topology>
    </subcellularLocation>
</comment>
<comment type="domain">
    <text evidence="1">The RING-type zinc finger domain mediates binding to an E2 ubiquitin-conjugating enzyme.</text>
</comment>
<comment type="similarity">
    <text evidence="4">Belongs to the RING-type zinc finger family. ATL subfamily.</text>
</comment>
<accession>Q9SKK8</accession>
<keyword id="KW-0472">Membrane</keyword>
<keyword id="KW-0479">Metal-binding</keyword>
<keyword id="KW-1185">Reference proteome</keyword>
<keyword id="KW-0732">Signal</keyword>
<keyword id="KW-0808">Transferase</keyword>
<keyword id="KW-0812">Transmembrane</keyword>
<keyword id="KW-1133">Transmembrane helix</keyword>
<keyword id="KW-0833">Ubl conjugation pathway</keyword>
<keyword id="KW-0862">Zinc</keyword>
<keyword id="KW-0863">Zinc-finger</keyword>
<evidence type="ECO:0000250" key="1"/>
<evidence type="ECO:0000255" key="2"/>
<evidence type="ECO:0000255" key="3">
    <source>
        <dbReference type="PROSITE-ProRule" id="PRU00175"/>
    </source>
</evidence>
<evidence type="ECO:0000305" key="4"/>
<gene>
    <name type="primary">ATL22</name>
    <name type="ordered locus">At2g25410</name>
    <name type="ORF">F13B15.7</name>
</gene>
<proteinExistence type="evidence at transcript level"/>
<organism>
    <name type="scientific">Arabidopsis thaliana</name>
    <name type="common">Mouse-ear cress</name>
    <dbReference type="NCBI Taxonomy" id="3702"/>
    <lineage>
        <taxon>Eukaryota</taxon>
        <taxon>Viridiplantae</taxon>
        <taxon>Streptophyta</taxon>
        <taxon>Embryophyta</taxon>
        <taxon>Tracheophyta</taxon>
        <taxon>Spermatophyta</taxon>
        <taxon>Magnoliopsida</taxon>
        <taxon>eudicotyledons</taxon>
        <taxon>Gunneridae</taxon>
        <taxon>Pentapetalae</taxon>
        <taxon>rosids</taxon>
        <taxon>malvids</taxon>
        <taxon>Brassicales</taxon>
        <taxon>Brassicaceae</taxon>
        <taxon>Camelineae</taxon>
        <taxon>Arabidopsis</taxon>
    </lineage>
</organism>
<protein>
    <recommendedName>
        <fullName>RING-H2 finger protein ATL22</fullName>
        <ecNumber evidence="4">2.3.2.27</ecNumber>
    </recommendedName>
    <alternativeName>
        <fullName evidence="4">RING-type E3 ubiquitin transferase ATL22</fullName>
    </alternativeName>
</protein>
<sequence>MTSKLLPLLLNLIFLFFFPLLNASEQKPCYSFSCSQESVVARFPFSLFSYQPESCGYSGFNLICKDDANTTLKLPKSEPFLVKEIDYETQRIRLNDPENCLARRLLNFDPSGSPFSFLRSRNYTFLICPKEANITASFRAIDCLGNTTSSFFVVQFENLGSMPSSCHIFKILPLPFSWFVAYTTYPDGQNSRDMWLKWDSPDCRDCERRTNSRCGFKNNTSHQVECFSSVNPGLHNTGLQVLKIMCLSLVGPLTALTFCVGLVMCSSERVSSQIQQAVVARLSGSVTSQPSNEVARIGLDESTIESYKKVELGESRRLPTGSNDVVCPICLSEYATKETVRCLPECEHCFHTECIDAWLKLHSSCPVCRSNPSPLRD</sequence>
<name>ATL22_ARATH</name>